<dbReference type="EMBL" id="DQ489736">
    <property type="protein sequence ID" value="ACA83407.1"/>
    <property type="molecule type" value="Genomic_DNA"/>
</dbReference>
<dbReference type="RefSeq" id="WP_004899447.1">
    <property type="nucleotide sequence ID" value="NC_010471.1"/>
</dbReference>
<dbReference type="SMR" id="B1MW03"/>
<dbReference type="STRING" id="349519.LCK_01584"/>
<dbReference type="GeneID" id="61103252"/>
<dbReference type="KEGG" id="lci:LCK_01584"/>
<dbReference type="eggNOG" id="COG0198">
    <property type="taxonomic scope" value="Bacteria"/>
</dbReference>
<dbReference type="HOGENOM" id="CLU_093315_2_0_9"/>
<dbReference type="OrthoDB" id="9807419at2"/>
<dbReference type="Proteomes" id="UP000002166">
    <property type="component" value="Chromosome"/>
</dbReference>
<dbReference type="GO" id="GO:1990904">
    <property type="term" value="C:ribonucleoprotein complex"/>
    <property type="evidence" value="ECO:0007669"/>
    <property type="project" value="UniProtKB-KW"/>
</dbReference>
<dbReference type="GO" id="GO:0005840">
    <property type="term" value="C:ribosome"/>
    <property type="evidence" value="ECO:0007669"/>
    <property type="project" value="UniProtKB-KW"/>
</dbReference>
<dbReference type="GO" id="GO:0019843">
    <property type="term" value="F:rRNA binding"/>
    <property type="evidence" value="ECO:0007669"/>
    <property type="project" value="UniProtKB-UniRule"/>
</dbReference>
<dbReference type="GO" id="GO:0003735">
    <property type="term" value="F:structural constituent of ribosome"/>
    <property type="evidence" value="ECO:0007669"/>
    <property type="project" value="InterPro"/>
</dbReference>
<dbReference type="GO" id="GO:0006412">
    <property type="term" value="P:translation"/>
    <property type="evidence" value="ECO:0007669"/>
    <property type="project" value="UniProtKB-UniRule"/>
</dbReference>
<dbReference type="CDD" id="cd06089">
    <property type="entry name" value="KOW_RPL26"/>
    <property type="match status" value="1"/>
</dbReference>
<dbReference type="FunFam" id="2.30.30.30:FF:000004">
    <property type="entry name" value="50S ribosomal protein L24"/>
    <property type="match status" value="1"/>
</dbReference>
<dbReference type="Gene3D" id="2.30.30.30">
    <property type="match status" value="1"/>
</dbReference>
<dbReference type="HAMAP" id="MF_01326_B">
    <property type="entry name" value="Ribosomal_uL24_B"/>
    <property type="match status" value="1"/>
</dbReference>
<dbReference type="InterPro" id="IPR005824">
    <property type="entry name" value="KOW"/>
</dbReference>
<dbReference type="InterPro" id="IPR014722">
    <property type="entry name" value="Rib_uL2_dom2"/>
</dbReference>
<dbReference type="InterPro" id="IPR003256">
    <property type="entry name" value="Ribosomal_uL24"/>
</dbReference>
<dbReference type="InterPro" id="IPR005825">
    <property type="entry name" value="Ribosomal_uL24_CS"/>
</dbReference>
<dbReference type="InterPro" id="IPR041988">
    <property type="entry name" value="Ribosomal_uL24_KOW"/>
</dbReference>
<dbReference type="InterPro" id="IPR008991">
    <property type="entry name" value="Translation_prot_SH3-like_sf"/>
</dbReference>
<dbReference type="NCBIfam" id="TIGR01079">
    <property type="entry name" value="rplX_bact"/>
    <property type="match status" value="1"/>
</dbReference>
<dbReference type="PANTHER" id="PTHR12903">
    <property type="entry name" value="MITOCHONDRIAL RIBOSOMAL PROTEIN L24"/>
    <property type="match status" value="1"/>
</dbReference>
<dbReference type="Pfam" id="PF00467">
    <property type="entry name" value="KOW"/>
    <property type="match status" value="1"/>
</dbReference>
<dbReference type="Pfam" id="PF17136">
    <property type="entry name" value="ribosomal_L24"/>
    <property type="match status" value="1"/>
</dbReference>
<dbReference type="SUPFAM" id="SSF50104">
    <property type="entry name" value="Translation proteins SH3-like domain"/>
    <property type="match status" value="1"/>
</dbReference>
<dbReference type="PROSITE" id="PS01108">
    <property type="entry name" value="RIBOSOMAL_L24"/>
    <property type="match status" value="1"/>
</dbReference>
<reference key="1">
    <citation type="journal article" date="2008" name="J. Bacteriol.">
        <title>Complete genome sequence of Leuconostoc citreum KM20.</title>
        <authorList>
            <person name="Kim J.F."/>
            <person name="Jeong H."/>
            <person name="Lee J.-S."/>
            <person name="Choi S.-H."/>
            <person name="Ha M."/>
            <person name="Hur C.-G."/>
            <person name="Kim J.-S."/>
            <person name="Lee S."/>
            <person name="Park H.-S."/>
            <person name="Park Y.-H."/>
            <person name="Oh T.K."/>
        </authorList>
    </citation>
    <scope>NUCLEOTIDE SEQUENCE [LARGE SCALE GENOMIC DNA]</scope>
    <source>
        <strain>KM20</strain>
    </source>
</reference>
<proteinExistence type="inferred from homology"/>
<protein>
    <recommendedName>
        <fullName evidence="1">Large ribosomal subunit protein uL24</fullName>
    </recommendedName>
    <alternativeName>
        <fullName evidence="2">50S ribosomal protein L24</fullName>
    </alternativeName>
</protein>
<sequence length="102" mass="10978">MFVKTGDKVRVIAGKDKGKEGTITKTVAGKDRVVVEGVNIVKKHQKPSNEYPQGGVIDIEAPIHVSNVQLLDPSTNEPTKVAFKIEDGKKVRVSKKSGNVLG</sequence>
<keyword id="KW-1185">Reference proteome</keyword>
<keyword id="KW-0687">Ribonucleoprotein</keyword>
<keyword id="KW-0689">Ribosomal protein</keyword>
<keyword id="KW-0694">RNA-binding</keyword>
<keyword id="KW-0699">rRNA-binding</keyword>
<accession>B1MW03</accession>
<evidence type="ECO:0000255" key="1">
    <source>
        <dbReference type="HAMAP-Rule" id="MF_01326"/>
    </source>
</evidence>
<evidence type="ECO:0000305" key="2"/>
<feature type="chain" id="PRO_1000142011" description="Large ribosomal subunit protein uL24">
    <location>
        <begin position="1"/>
        <end position="102"/>
    </location>
</feature>
<organism>
    <name type="scientific">Leuconostoc citreum (strain KM20)</name>
    <dbReference type="NCBI Taxonomy" id="349519"/>
    <lineage>
        <taxon>Bacteria</taxon>
        <taxon>Bacillati</taxon>
        <taxon>Bacillota</taxon>
        <taxon>Bacilli</taxon>
        <taxon>Lactobacillales</taxon>
        <taxon>Lactobacillaceae</taxon>
        <taxon>Leuconostoc</taxon>
    </lineage>
</organism>
<comment type="function">
    <text evidence="1">One of two assembly initiator proteins, it binds directly to the 5'-end of the 23S rRNA, where it nucleates assembly of the 50S subunit.</text>
</comment>
<comment type="function">
    <text evidence="1">One of the proteins that surrounds the polypeptide exit tunnel on the outside of the subunit.</text>
</comment>
<comment type="subunit">
    <text evidence="1">Part of the 50S ribosomal subunit.</text>
</comment>
<comment type="similarity">
    <text evidence="1">Belongs to the universal ribosomal protein uL24 family.</text>
</comment>
<gene>
    <name evidence="1" type="primary">rplX</name>
    <name type="ordered locus">LCK_01584</name>
</gene>
<name>RL24_LEUCK</name>